<evidence type="ECO:0000250" key="1"/>
<evidence type="ECO:0000255" key="2"/>
<evidence type="ECO:0000255" key="3">
    <source>
        <dbReference type="PROSITE-ProRule" id="PRU10052"/>
    </source>
</evidence>
<evidence type="ECO:0000269" key="4">
    <source>
    </source>
</evidence>
<evidence type="ECO:0000305" key="5"/>
<keyword id="KW-0961">Cell wall biogenesis/degradation</keyword>
<keyword id="KW-1015">Disulfide bond</keyword>
<keyword id="KW-0325">Glycoprotein</keyword>
<keyword id="KW-0326">Glycosidase</keyword>
<keyword id="KW-0378">Hydrolase</keyword>
<keyword id="KW-0677">Repeat</keyword>
<keyword id="KW-0964">Secreted</keyword>
<keyword id="KW-0732">Signal</keyword>
<gene>
    <name type="primary">pgxA</name>
</gene>
<sequence length="434" mass="46966">MKLPILVTLFITLPALCVSSKTPSAPTISAYPKSPGNFKPASGRQNSTSNVCEVKPNQTDAAPGILAAAHTCNNGGTVFLPPGDFVVATALDLTFLNNIDFAIWGNITFKKDIDLWTTQAFQYTFQTASLFWRFGGNNVNIYGDGKGVIDGAGQYWWSAMAEDSSVMRPCLLGTDGLHHATISGLTMLNSPNWFNLIANSTDILISNMTMLVESEISDAPAKNTDGWDIYRSSNIVIQDSRIVNTDDCVSFKPNSTQIVIQNLDCTGSHGISVGSLGQYQGETDIVEDLYIYNISMTDASDVARIKVWPGVPADTSGSTSGGGLGRVRNVTYEHMQSENNDHIISVSQCYESKNQTMCDSYPSKLVIEDVLFKDFKGTTSKKYDPEIGELTCSSPDVCHNITVQDINVTPPSGDSPTFTCNNMGNSNLEDITCA</sequence>
<reference key="1">
    <citation type="journal article" date="2006" name="Biochem. J.">
        <title>A new group of exo-acting family 28 glycoside hydrolases of Aspergillus niger that are involved in pectin degradation.</title>
        <authorList>
            <person name="Martens-Uzunova E.S."/>
            <person name="Zandleven J.S."/>
            <person name="Benen J.A."/>
            <person name="Awad H."/>
            <person name="Kools H.J."/>
            <person name="Beldman G."/>
            <person name="Voragen A.G."/>
            <person name="Van den Berg J.A."/>
            <person name="Schaap P.J."/>
        </authorList>
    </citation>
    <scope>NUCLEOTIDE SEQUENCE [GENOMIC DNA]</scope>
    <scope>FUNCTION</scope>
    <source>
        <strain>CBS 513.88</strain>
    </source>
</reference>
<accession>Q27UB2</accession>
<proteinExistence type="inferred from homology"/>
<organism>
    <name type="scientific">Aspergillus niger</name>
    <dbReference type="NCBI Taxonomy" id="5061"/>
    <lineage>
        <taxon>Eukaryota</taxon>
        <taxon>Fungi</taxon>
        <taxon>Dikarya</taxon>
        <taxon>Ascomycota</taxon>
        <taxon>Pezizomycotina</taxon>
        <taxon>Eurotiomycetes</taxon>
        <taxon>Eurotiomycetidae</taxon>
        <taxon>Eurotiales</taxon>
        <taxon>Aspergillaceae</taxon>
        <taxon>Aspergillus</taxon>
        <taxon>Aspergillus subgen. Circumdati</taxon>
    </lineage>
</organism>
<name>PGXA_ASPNG</name>
<dbReference type="EC" id="3.2.1.67"/>
<dbReference type="EMBL" id="DQ374423">
    <property type="protein sequence ID" value="ABD61563.1"/>
    <property type="molecule type" value="Genomic_DNA"/>
</dbReference>
<dbReference type="RefSeq" id="XP_001394399.1">
    <property type="nucleotide sequence ID" value="XM_001394362.1"/>
</dbReference>
<dbReference type="SMR" id="Q27UB2"/>
<dbReference type="GlyCosmos" id="Q27UB2">
    <property type="glycosylation" value="10 sites, No reported glycans"/>
</dbReference>
<dbReference type="PaxDb" id="5061-CADANGAP00008581"/>
<dbReference type="EnsemblFungi" id="CAK48389">
    <property type="protein sequence ID" value="CAK48389"/>
    <property type="gene ID" value="An11g04040"/>
</dbReference>
<dbReference type="KEGG" id="ang:An11g04040"/>
<dbReference type="VEuPathDB" id="FungiDB:An11g04040"/>
<dbReference type="VEuPathDB" id="FungiDB:ASPNIDRAFT2_1178374"/>
<dbReference type="VEuPathDB" id="FungiDB:ATCC64974_90170"/>
<dbReference type="VEuPathDB" id="FungiDB:M747DRAFT_322702"/>
<dbReference type="eggNOG" id="ENOG502QPPR">
    <property type="taxonomic scope" value="Eukaryota"/>
</dbReference>
<dbReference type="BioCyc" id="MetaCyc:MONOMER-20556"/>
<dbReference type="GO" id="GO:0005576">
    <property type="term" value="C:extracellular region"/>
    <property type="evidence" value="ECO:0007669"/>
    <property type="project" value="UniProtKB-SubCell"/>
</dbReference>
<dbReference type="GO" id="GO:0047911">
    <property type="term" value="F:galacturan 1,4-alpha-galacturonidase activity"/>
    <property type="evidence" value="ECO:0007669"/>
    <property type="project" value="UniProtKB-EC"/>
</dbReference>
<dbReference type="GO" id="GO:0004650">
    <property type="term" value="F:polygalacturonase activity"/>
    <property type="evidence" value="ECO:0007669"/>
    <property type="project" value="InterPro"/>
</dbReference>
<dbReference type="GO" id="GO:0005975">
    <property type="term" value="P:carbohydrate metabolic process"/>
    <property type="evidence" value="ECO:0007669"/>
    <property type="project" value="InterPro"/>
</dbReference>
<dbReference type="GO" id="GO:0071555">
    <property type="term" value="P:cell wall organization"/>
    <property type="evidence" value="ECO:0007669"/>
    <property type="project" value="UniProtKB-KW"/>
</dbReference>
<dbReference type="FunFam" id="2.160.20.10:FF:000027">
    <property type="entry name" value="Probable exopolygalacturonase X"/>
    <property type="match status" value="1"/>
</dbReference>
<dbReference type="Gene3D" id="2.160.20.10">
    <property type="entry name" value="Single-stranded right-handed beta-helix, Pectin lyase-like"/>
    <property type="match status" value="1"/>
</dbReference>
<dbReference type="InterPro" id="IPR000743">
    <property type="entry name" value="Glyco_hydro_28"/>
</dbReference>
<dbReference type="InterPro" id="IPR012334">
    <property type="entry name" value="Pectin_lyas_fold"/>
</dbReference>
<dbReference type="InterPro" id="IPR011050">
    <property type="entry name" value="Pectin_lyase_fold/virulence"/>
</dbReference>
<dbReference type="PANTHER" id="PTHR31736">
    <property type="match status" value="1"/>
</dbReference>
<dbReference type="PANTHER" id="PTHR31736:SF14">
    <property type="entry name" value="EXOPOLYGALACTURONASE X-1-RELATED"/>
    <property type="match status" value="1"/>
</dbReference>
<dbReference type="Pfam" id="PF00295">
    <property type="entry name" value="Glyco_hydro_28"/>
    <property type="match status" value="1"/>
</dbReference>
<dbReference type="SUPFAM" id="SSF51126">
    <property type="entry name" value="Pectin lyase-like"/>
    <property type="match status" value="1"/>
</dbReference>
<dbReference type="PROSITE" id="PS00502">
    <property type="entry name" value="POLYGALACTURONASE"/>
    <property type="match status" value="1"/>
</dbReference>
<comment type="function">
    <text evidence="4">Specific in hydrolyzing the terminal glycosidic bond of polygalacturonic acid and oligogalacturonates.</text>
</comment>
<comment type="catalytic activity">
    <reaction>
        <text>[(1-&gt;4)-alpha-D-galacturonosyl](n) + H2O = alpha-D-galacturonate + [(1-&gt;4)-alpha-D-galacturonosyl](n-1)</text>
        <dbReference type="Rhea" id="RHEA:14117"/>
        <dbReference type="Rhea" id="RHEA-COMP:14570"/>
        <dbReference type="Rhea" id="RHEA-COMP:14572"/>
        <dbReference type="ChEBI" id="CHEBI:15377"/>
        <dbReference type="ChEBI" id="CHEBI:58658"/>
        <dbReference type="ChEBI" id="CHEBI:140523"/>
        <dbReference type="EC" id="3.2.1.67"/>
    </reaction>
</comment>
<comment type="subcellular location">
    <subcellularLocation>
        <location evidence="1">Secreted</location>
    </subcellularLocation>
</comment>
<comment type="similarity">
    <text evidence="5">Belongs to the glycosyl hydrolase 28 family.</text>
</comment>
<protein>
    <recommendedName>
        <fullName>Exopolygalacturonase A</fullName>
        <ecNumber>3.2.1.67</ecNumber>
    </recommendedName>
    <alternativeName>
        <fullName>Galacturan 1,4-alpha-galacturonidase A</fullName>
    </alternativeName>
    <alternativeName>
        <fullName>Poly(1,4-alpha-D-galacturonide)galacturonohydrolase A</fullName>
    </alternativeName>
</protein>
<feature type="signal peptide" evidence="2">
    <location>
        <begin position="1"/>
        <end position="19"/>
    </location>
</feature>
<feature type="chain" id="PRO_0000393674" description="Exopolygalacturonase A">
    <location>
        <begin position="20"/>
        <end position="434"/>
    </location>
</feature>
<feature type="repeat" description="PbH1 1">
    <location>
        <begin position="232"/>
        <end position="253"/>
    </location>
</feature>
<feature type="repeat" description="PbH1 2">
    <location>
        <begin position="255"/>
        <end position="275"/>
    </location>
</feature>
<feature type="active site" description="Proton donor" evidence="3">
    <location>
        <position position="246"/>
    </location>
</feature>
<feature type="active site" evidence="3">
    <location>
        <position position="269"/>
    </location>
</feature>
<feature type="glycosylation site" description="N-linked (GlcNAc...) asparagine" evidence="2">
    <location>
        <position position="46"/>
    </location>
</feature>
<feature type="glycosylation site" description="N-linked (GlcNAc...) asparagine" evidence="2">
    <location>
        <position position="57"/>
    </location>
</feature>
<feature type="glycosylation site" description="N-linked (GlcNAc...) asparagine" evidence="2">
    <location>
        <position position="106"/>
    </location>
</feature>
<feature type="glycosylation site" description="N-linked (GlcNAc...) asparagine" evidence="2">
    <location>
        <position position="199"/>
    </location>
</feature>
<feature type="glycosylation site" description="N-linked (GlcNAc...) asparagine" evidence="2">
    <location>
        <position position="207"/>
    </location>
</feature>
<feature type="glycosylation site" description="N-linked (GlcNAc...) asparagine" evidence="2">
    <location>
        <position position="254"/>
    </location>
</feature>
<feature type="glycosylation site" description="N-linked (GlcNAc...) asparagine" evidence="2">
    <location>
        <position position="293"/>
    </location>
</feature>
<feature type="glycosylation site" description="N-linked (GlcNAc...) asparagine" evidence="2">
    <location>
        <position position="329"/>
    </location>
</feature>
<feature type="glycosylation site" description="N-linked (GlcNAc...) asparagine" evidence="2">
    <location>
        <position position="354"/>
    </location>
</feature>
<feature type="glycosylation site" description="N-linked (GlcNAc...) asparagine" evidence="2">
    <location>
        <position position="400"/>
    </location>
</feature>
<feature type="disulfide bond" evidence="1">
    <location>
        <begin position="248"/>
        <end position="265"/>
    </location>
</feature>
<feature type="disulfide bond" evidence="1">
    <location>
        <begin position="392"/>
        <end position="398"/>
    </location>
</feature>